<evidence type="ECO:0000255" key="1">
    <source>
        <dbReference type="HAMAP-Rule" id="MF_00340"/>
    </source>
</evidence>
<evidence type="ECO:0000305" key="2"/>
<comment type="subcellular location">
    <subcellularLocation>
        <location>Plastid</location>
        <location>Chloroplast</location>
    </subcellularLocation>
</comment>
<comment type="similarity">
    <text evidence="1">Belongs to the bacterial ribosomal protein bL32 family.</text>
</comment>
<organism>
    <name type="scientific">Aethionema cordifolium</name>
    <name type="common">Lebanon stonecress</name>
    <dbReference type="NCBI Taxonomy" id="434059"/>
    <lineage>
        <taxon>Eukaryota</taxon>
        <taxon>Viridiplantae</taxon>
        <taxon>Streptophyta</taxon>
        <taxon>Embryophyta</taxon>
        <taxon>Tracheophyta</taxon>
        <taxon>Spermatophyta</taxon>
        <taxon>Magnoliopsida</taxon>
        <taxon>eudicotyledons</taxon>
        <taxon>Gunneridae</taxon>
        <taxon>Pentapetalae</taxon>
        <taxon>rosids</taxon>
        <taxon>malvids</taxon>
        <taxon>Brassicales</taxon>
        <taxon>Brassicaceae</taxon>
        <taxon>Aethionemeae</taxon>
        <taxon>Aethionema</taxon>
    </lineage>
</organism>
<dbReference type="EMBL" id="AP009366">
    <property type="protein sequence ID" value="BAF49819.1"/>
    <property type="molecule type" value="Genomic_DNA"/>
</dbReference>
<dbReference type="RefSeq" id="YP_001122994.1">
    <property type="nucleotide sequence ID" value="NC_009265.1"/>
</dbReference>
<dbReference type="SMR" id="A4QJG4"/>
<dbReference type="GeneID" id="4968615"/>
<dbReference type="GO" id="GO:0009507">
    <property type="term" value="C:chloroplast"/>
    <property type="evidence" value="ECO:0007669"/>
    <property type="project" value="UniProtKB-SubCell"/>
</dbReference>
<dbReference type="GO" id="GO:0015934">
    <property type="term" value="C:large ribosomal subunit"/>
    <property type="evidence" value="ECO:0007669"/>
    <property type="project" value="InterPro"/>
</dbReference>
<dbReference type="GO" id="GO:0003735">
    <property type="term" value="F:structural constituent of ribosome"/>
    <property type="evidence" value="ECO:0007669"/>
    <property type="project" value="InterPro"/>
</dbReference>
<dbReference type="GO" id="GO:0006412">
    <property type="term" value="P:translation"/>
    <property type="evidence" value="ECO:0007669"/>
    <property type="project" value="UniProtKB-UniRule"/>
</dbReference>
<dbReference type="HAMAP" id="MF_00340">
    <property type="entry name" value="Ribosomal_bL32"/>
    <property type="match status" value="1"/>
</dbReference>
<dbReference type="InterPro" id="IPR002677">
    <property type="entry name" value="Ribosomal_bL32"/>
</dbReference>
<dbReference type="InterPro" id="IPR044958">
    <property type="entry name" value="Ribosomal_bL32_plant/cyanobact"/>
</dbReference>
<dbReference type="InterPro" id="IPR011332">
    <property type="entry name" value="Ribosomal_zn-bd"/>
</dbReference>
<dbReference type="PANTHER" id="PTHR36083">
    <property type="entry name" value="50S RIBOSOMAL PROTEIN L32, CHLOROPLASTIC"/>
    <property type="match status" value="1"/>
</dbReference>
<dbReference type="PANTHER" id="PTHR36083:SF1">
    <property type="entry name" value="LARGE RIBOSOMAL SUBUNIT PROTEIN BL32C"/>
    <property type="match status" value="1"/>
</dbReference>
<dbReference type="Pfam" id="PF01783">
    <property type="entry name" value="Ribosomal_L32p"/>
    <property type="match status" value="1"/>
</dbReference>
<dbReference type="SUPFAM" id="SSF57829">
    <property type="entry name" value="Zn-binding ribosomal proteins"/>
    <property type="match status" value="1"/>
</dbReference>
<keyword id="KW-0150">Chloroplast</keyword>
<keyword id="KW-0934">Plastid</keyword>
<keyword id="KW-0687">Ribonucleoprotein</keyword>
<keyword id="KW-0689">Ribosomal protein</keyword>
<protein>
    <recommendedName>
        <fullName evidence="1">Large ribosomal subunit protein bL32c</fullName>
    </recommendedName>
    <alternativeName>
        <fullName evidence="2">50S ribosomal protein L32, chloroplastic</fullName>
    </alternativeName>
</protein>
<accession>A4QJG4</accession>
<feature type="chain" id="PRO_0000296604" description="Large ribosomal subunit protein bL32c">
    <location>
        <begin position="1"/>
        <end position="52"/>
    </location>
</feature>
<name>RK32_AETCO</name>
<gene>
    <name evidence="1" type="primary">rpl32</name>
</gene>
<sequence>MAVPKKRTSISKKRIRKKIWKRKGYWTSLKAFSLGKSLSTGNSKSFFVQQNK</sequence>
<geneLocation type="chloroplast"/>
<reference key="1">
    <citation type="submission" date="2007-03" db="EMBL/GenBank/DDBJ databases">
        <title>Sequencing analysis of Aethionema coridifolium chloroplast DNA.</title>
        <authorList>
            <person name="Hosouchi T."/>
            <person name="Tsuruoka H."/>
            <person name="Kotani H."/>
        </authorList>
    </citation>
    <scope>NUCLEOTIDE SEQUENCE [LARGE SCALE GENOMIC DNA]</scope>
</reference>
<proteinExistence type="inferred from homology"/>